<comment type="function">
    <text>Is probably involved in a pathway contributing to genomic integrity.</text>
</comment>
<comment type="subcellular location">
    <subcellularLocation>
        <location evidence="1">Endoplasmic reticulum membrane</location>
        <topology evidence="1">Single-pass type I membrane protein</topology>
    </subcellularLocation>
</comment>
<comment type="similarity">
    <text evidence="4">Belongs to the IRC22 family.</text>
</comment>
<feature type="signal peptide" evidence="2">
    <location>
        <begin position="1"/>
        <end position="19"/>
    </location>
</feature>
<feature type="chain" id="PRO_0000399072" description="Increased recombination centers protein 22-1">
    <location>
        <begin position="20"/>
        <end position="239"/>
    </location>
</feature>
<feature type="topological domain" description="Lumenal" evidence="2">
    <location>
        <begin position="20"/>
        <end position="161"/>
    </location>
</feature>
<feature type="transmembrane region" description="Helical" evidence="2">
    <location>
        <begin position="162"/>
        <end position="182"/>
    </location>
</feature>
<feature type="topological domain" description="Cytoplasmic" evidence="2">
    <location>
        <begin position="183"/>
        <end position="239"/>
    </location>
</feature>
<feature type="region of interest" description="Disordered" evidence="3">
    <location>
        <begin position="201"/>
        <end position="222"/>
    </location>
</feature>
<feature type="compositionally biased region" description="Low complexity" evidence="3">
    <location>
        <begin position="201"/>
        <end position="213"/>
    </location>
</feature>
<protein>
    <recommendedName>
        <fullName>Increased recombination centers protein 22-1</fullName>
    </recommendedName>
</protein>
<name>IR221_CANAW</name>
<reference key="1">
    <citation type="journal article" date="2009" name="Nature">
        <title>Evolution of pathogenicity and sexual reproduction in eight Candida genomes.</title>
        <authorList>
            <person name="Butler G."/>
            <person name="Rasmussen M.D."/>
            <person name="Lin M.F."/>
            <person name="Santos M.A.S."/>
            <person name="Sakthikumar S."/>
            <person name="Munro C.A."/>
            <person name="Rheinbay E."/>
            <person name="Grabherr M."/>
            <person name="Forche A."/>
            <person name="Reedy J.L."/>
            <person name="Agrafioti I."/>
            <person name="Arnaud M.B."/>
            <person name="Bates S."/>
            <person name="Brown A.J.P."/>
            <person name="Brunke S."/>
            <person name="Costanzo M.C."/>
            <person name="Fitzpatrick D.A."/>
            <person name="de Groot P.W.J."/>
            <person name="Harris D."/>
            <person name="Hoyer L.L."/>
            <person name="Hube B."/>
            <person name="Klis F.M."/>
            <person name="Kodira C."/>
            <person name="Lennard N."/>
            <person name="Logue M.E."/>
            <person name="Martin R."/>
            <person name="Neiman A.M."/>
            <person name="Nikolaou E."/>
            <person name="Quail M.A."/>
            <person name="Quinn J."/>
            <person name="Santos M.C."/>
            <person name="Schmitzberger F.F."/>
            <person name="Sherlock G."/>
            <person name="Shah P."/>
            <person name="Silverstein K.A.T."/>
            <person name="Skrzypek M.S."/>
            <person name="Soll D."/>
            <person name="Staggs R."/>
            <person name="Stansfield I."/>
            <person name="Stumpf M.P.H."/>
            <person name="Sudbery P.E."/>
            <person name="Srikantha T."/>
            <person name="Zeng Q."/>
            <person name="Berman J."/>
            <person name="Berriman M."/>
            <person name="Heitman J."/>
            <person name="Gow N.A.R."/>
            <person name="Lorenz M.C."/>
            <person name="Birren B.W."/>
            <person name="Kellis M."/>
            <person name="Cuomo C.A."/>
        </authorList>
    </citation>
    <scope>NUCLEOTIDE SEQUENCE [LARGE SCALE GENOMIC DNA]</scope>
    <source>
        <strain>WO-1</strain>
    </source>
</reference>
<keyword id="KW-0256">Endoplasmic reticulum</keyword>
<keyword id="KW-0472">Membrane</keyword>
<keyword id="KW-0732">Signal</keyword>
<keyword id="KW-0812">Transmembrane</keyword>
<keyword id="KW-1133">Transmembrane helix</keyword>
<proteinExistence type="inferred from homology"/>
<organism>
    <name type="scientific">Candida albicans (strain WO-1)</name>
    <name type="common">Yeast</name>
    <dbReference type="NCBI Taxonomy" id="294748"/>
    <lineage>
        <taxon>Eukaryota</taxon>
        <taxon>Fungi</taxon>
        <taxon>Dikarya</taxon>
        <taxon>Ascomycota</taxon>
        <taxon>Saccharomycotina</taxon>
        <taxon>Pichiomycetes</taxon>
        <taxon>Debaryomycetaceae</taxon>
        <taxon>Candida/Lodderomyces clade</taxon>
        <taxon>Candida</taxon>
    </lineage>
</organism>
<sequence length="239" mass="25952">MKLSTIFTAFAATIATVAGYETTGSKQTVDILIDYIIKETPELSQNDVANWENGDTVTLQYVVNNNEESEITVVGVTGQFKNPVNNEIVTNLTTGKVGPIAVPPGEAIKFDQKINVDLIPANYELIPYVFIAQDSLIKVIPCRGQLATIVDAAVSFFDPRLIFLELVLLITFAGLIYVGYEIWGKQYFKGVASVKAKKVSAAKASSPVASGPSTTSATGYDTNWIPESHLKQKKTKKVN</sequence>
<dbReference type="EMBL" id="CH672354">
    <property type="protein sequence ID" value="EEQ47474.1"/>
    <property type="molecule type" value="Genomic_DNA"/>
</dbReference>
<dbReference type="SMR" id="C4YKP5"/>
<dbReference type="PaxDb" id="5476-C4YKP5"/>
<dbReference type="VEuPathDB" id="FungiDB:CAWG_06051"/>
<dbReference type="HOGENOM" id="CLU_078554_0_0_1"/>
<dbReference type="OMA" id="WLPETYK"/>
<dbReference type="OrthoDB" id="11865at766764"/>
<dbReference type="Proteomes" id="UP000001429">
    <property type="component" value="Chromosome 2, Supercontig 1.9"/>
</dbReference>
<dbReference type="GO" id="GO:0005789">
    <property type="term" value="C:endoplasmic reticulum membrane"/>
    <property type="evidence" value="ECO:0007669"/>
    <property type="project" value="UniProtKB-SubCell"/>
</dbReference>
<dbReference type="InterPro" id="IPR005595">
    <property type="entry name" value="TRAP_alpha"/>
</dbReference>
<dbReference type="PANTHER" id="PTHR12924:SF0">
    <property type="entry name" value="TRANSLOCON-ASSOCIATED PROTEIN SUBUNIT ALPHA"/>
    <property type="match status" value="1"/>
</dbReference>
<dbReference type="PANTHER" id="PTHR12924">
    <property type="entry name" value="TRANSLOCON-ASSOCIATED PROTEIN, ALPHA SUBUNIT"/>
    <property type="match status" value="1"/>
</dbReference>
<dbReference type="Pfam" id="PF03896">
    <property type="entry name" value="TRAP_alpha"/>
    <property type="match status" value="1"/>
</dbReference>
<accession>C4YKP5</accession>
<gene>
    <name type="primary">IRC22-1</name>
    <name type="ORF">CAWG_06051</name>
</gene>
<evidence type="ECO:0000250" key="1"/>
<evidence type="ECO:0000255" key="2"/>
<evidence type="ECO:0000256" key="3">
    <source>
        <dbReference type="SAM" id="MobiDB-lite"/>
    </source>
</evidence>
<evidence type="ECO:0000305" key="4"/>